<evidence type="ECO:0000255" key="1">
    <source>
        <dbReference type="HAMAP-Rule" id="MF_00412"/>
    </source>
</evidence>
<dbReference type="EC" id="1.2.1.41" evidence="1"/>
<dbReference type="EMBL" id="CP001001">
    <property type="protein sequence ID" value="ACB22130.1"/>
    <property type="molecule type" value="Genomic_DNA"/>
</dbReference>
<dbReference type="RefSeq" id="WP_012317130.1">
    <property type="nucleotide sequence ID" value="NC_010505.1"/>
</dbReference>
<dbReference type="SMR" id="B1M695"/>
<dbReference type="STRING" id="426355.Mrad2831_0103"/>
<dbReference type="GeneID" id="6136403"/>
<dbReference type="KEGG" id="mrd:Mrad2831_0103"/>
<dbReference type="PATRIC" id="fig|426355.14.peg.128"/>
<dbReference type="eggNOG" id="COG0014">
    <property type="taxonomic scope" value="Bacteria"/>
</dbReference>
<dbReference type="HOGENOM" id="CLU_030231_0_0_5"/>
<dbReference type="OrthoDB" id="9809970at2"/>
<dbReference type="UniPathway" id="UPA00098">
    <property type="reaction ID" value="UER00360"/>
</dbReference>
<dbReference type="Proteomes" id="UP000006589">
    <property type="component" value="Chromosome"/>
</dbReference>
<dbReference type="GO" id="GO:0005737">
    <property type="term" value="C:cytoplasm"/>
    <property type="evidence" value="ECO:0007669"/>
    <property type="project" value="UniProtKB-SubCell"/>
</dbReference>
<dbReference type="GO" id="GO:0004350">
    <property type="term" value="F:glutamate-5-semialdehyde dehydrogenase activity"/>
    <property type="evidence" value="ECO:0007669"/>
    <property type="project" value="UniProtKB-UniRule"/>
</dbReference>
<dbReference type="GO" id="GO:0050661">
    <property type="term" value="F:NADP binding"/>
    <property type="evidence" value="ECO:0007669"/>
    <property type="project" value="InterPro"/>
</dbReference>
<dbReference type="GO" id="GO:0055129">
    <property type="term" value="P:L-proline biosynthetic process"/>
    <property type="evidence" value="ECO:0007669"/>
    <property type="project" value="UniProtKB-UniRule"/>
</dbReference>
<dbReference type="CDD" id="cd07079">
    <property type="entry name" value="ALDH_F18-19_ProA-GPR"/>
    <property type="match status" value="1"/>
</dbReference>
<dbReference type="FunFam" id="3.40.309.10:FF:000006">
    <property type="entry name" value="Gamma-glutamyl phosphate reductase"/>
    <property type="match status" value="1"/>
</dbReference>
<dbReference type="Gene3D" id="3.40.605.10">
    <property type="entry name" value="Aldehyde Dehydrogenase, Chain A, domain 1"/>
    <property type="match status" value="1"/>
</dbReference>
<dbReference type="Gene3D" id="3.40.309.10">
    <property type="entry name" value="Aldehyde Dehydrogenase, Chain A, domain 2"/>
    <property type="match status" value="1"/>
</dbReference>
<dbReference type="HAMAP" id="MF_00412">
    <property type="entry name" value="ProA"/>
    <property type="match status" value="1"/>
</dbReference>
<dbReference type="InterPro" id="IPR016161">
    <property type="entry name" value="Ald_DH/histidinol_DH"/>
</dbReference>
<dbReference type="InterPro" id="IPR016163">
    <property type="entry name" value="Ald_DH_C"/>
</dbReference>
<dbReference type="InterPro" id="IPR016162">
    <property type="entry name" value="Ald_DH_N"/>
</dbReference>
<dbReference type="InterPro" id="IPR015590">
    <property type="entry name" value="Aldehyde_DH_dom"/>
</dbReference>
<dbReference type="InterPro" id="IPR020593">
    <property type="entry name" value="G-glutamylP_reductase_CS"/>
</dbReference>
<dbReference type="InterPro" id="IPR012134">
    <property type="entry name" value="Glu-5-SA_DH"/>
</dbReference>
<dbReference type="InterPro" id="IPR000965">
    <property type="entry name" value="GPR_dom"/>
</dbReference>
<dbReference type="NCBIfam" id="NF001221">
    <property type="entry name" value="PRK00197.1"/>
    <property type="match status" value="1"/>
</dbReference>
<dbReference type="NCBIfam" id="TIGR00407">
    <property type="entry name" value="proA"/>
    <property type="match status" value="1"/>
</dbReference>
<dbReference type="PANTHER" id="PTHR11063:SF8">
    <property type="entry name" value="DELTA-1-PYRROLINE-5-CARBOXYLATE SYNTHASE"/>
    <property type="match status" value="1"/>
</dbReference>
<dbReference type="PANTHER" id="PTHR11063">
    <property type="entry name" value="GLUTAMATE SEMIALDEHYDE DEHYDROGENASE"/>
    <property type="match status" value="1"/>
</dbReference>
<dbReference type="Pfam" id="PF00171">
    <property type="entry name" value="Aldedh"/>
    <property type="match status" value="1"/>
</dbReference>
<dbReference type="PIRSF" id="PIRSF000151">
    <property type="entry name" value="GPR"/>
    <property type="match status" value="1"/>
</dbReference>
<dbReference type="SUPFAM" id="SSF53720">
    <property type="entry name" value="ALDH-like"/>
    <property type="match status" value="1"/>
</dbReference>
<dbReference type="PROSITE" id="PS01223">
    <property type="entry name" value="PROA"/>
    <property type="match status" value="1"/>
</dbReference>
<keyword id="KW-0028">Amino-acid biosynthesis</keyword>
<keyword id="KW-0963">Cytoplasm</keyword>
<keyword id="KW-0521">NADP</keyword>
<keyword id="KW-0560">Oxidoreductase</keyword>
<keyword id="KW-0641">Proline biosynthesis</keyword>
<accession>B1M695</accession>
<reference key="1">
    <citation type="submission" date="2008-03" db="EMBL/GenBank/DDBJ databases">
        <title>Complete sequence of chromosome of Methylobacterium radiotolerans JCM 2831.</title>
        <authorList>
            <consortium name="US DOE Joint Genome Institute"/>
            <person name="Copeland A."/>
            <person name="Lucas S."/>
            <person name="Lapidus A."/>
            <person name="Glavina del Rio T."/>
            <person name="Dalin E."/>
            <person name="Tice H."/>
            <person name="Bruce D."/>
            <person name="Goodwin L."/>
            <person name="Pitluck S."/>
            <person name="Kiss H."/>
            <person name="Brettin T."/>
            <person name="Detter J.C."/>
            <person name="Han C."/>
            <person name="Kuske C.R."/>
            <person name="Schmutz J."/>
            <person name="Larimer F."/>
            <person name="Land M."/>
            <person name="Hauser L."/>
            <person name="Kyrpides N."/>
            <person name="Mikhailova N."/>
            <person name="Marx C.J."/>
            <person name="Richardson P."/>
        </authorList>
    </citation>
    <scope>NUCLEOTIDE SEQUENCE [LARGE SCALE GENOMIC DNA]</scope>
    <source>
        <strain>ATCC 27329 / DSM 1819 / JCM 2831 / NBRC 15690 / NCIMB 10815 / 0-1</strain>
    </source>
</reference>
<sequence>MPVLNLRSDFAEADALPEQMGAIGRRARAAARRMALASARTKDAALKLIAERIRASRDEILSENARDVAAARCAGQTAALIDRLTLDPGRLAAIADAVEKVGSLADPVGRQLAAIERPNGLLIERIAVPLGVVGVIFEARPNVTADAGALCLKAGNAAILRAGSDSHRSAMAIARAMSRGLADAGLPEDAIQLVPTRDRAAVGLMLAGLDGCVDVIVPRGGRGLVERVQAEARVPVFAHLDGINHVYVAAAADLDMARTVLLNSKMRRTSVCGAAETLLVDRACAATHLAPLVQALLDAGCAVRGDAATRAVDPRVTAASEEDWHTEYLDAIIAVRVVDGIEAAIEHIETYGSHHTDAIITENDAEATRFLAEVDSAIVTHNASTQFADGGEFGFGAEIGIATGRMHARGPVGVEQLTTFKYRVHGTGQIRP</sequence>
<comment type="function">
    <text evidence="1">Catalyzes the NADPH-dependent reduction of L-glutamate 5-phosphate into L-glutamate 5-semialdehyde and phosphate. The product spontaneously undergoes cyclization to form 1-pyrroline-5-carboxylate.</text>
</comment>
<comment type="catalytic activity">
    <reaction evidence="1">
        <text>L-glutamate 5-semialdehyde + phosphate + NADP(+) = L-glutamyl 5-phosphate + NADPH + H(+)</text>
        <dbReference type="Rhea" id="RHEA:19541"/>
        <dbReference type="ChEBI" id="CHEBI:15378"/>
        <dbReference type="ChEBI" id="CHEBI:43474"/>
        <dbReference type="ChEBI" id="CHEBI:57783"/>
        <dbReference type="ChEBI" id="CHEBI:58066"/>
        <dbReference type="ChEBI" id="CHEBI:58274"/>
        <dbReference type="ChEBI" id="CHEBI:58349"/>
        <dbReference type="EC" id="1.2.1.41"/>
    </reaction>
</comment>
<comment type="pathway">
    <text evidence="1">Amino-acid biosynthesis; L-proline biosynthesis; L-glutamate 5-semialdehyde from L-glutamate: step 2/2.</text>
</comment>
<comment type="subcellular location">
    <subcellularLocation>
        <location evidence="1">Cytoplasm</location>
    </subcellularLocation>
</comment>
<comment type="similarity">
    <text evidence="1">Belongs to the gamma-glutamyl phosphate reductase family.</text>
</comment>
<name>PROA_METRJ</name>
<protein>
    <recommendedName>
        <fullName evidence="1">Gamma-glutamyl phosphate reductase</fullName>
        <shortName evidence="1">GPR</shortName>
        <ecNumber evidence="1">1.2.1.41</ecNumber>
    </recommendedName>
    <alternativeName>
        <fullName evidence="1">Glutamate-5-semialdehyde dehydrogenase</fullName>
    </alternativeName>
    <alternativeName>
        <fullName evidence="1">Glutamyl-gamma-semialdehyde dehydrogenase</fullName>
        <shortName evidence="1">GSA dehydrogenase</shortName>
    </alternativeName>
</protein>
<organism>
    <name type="scientific">Methylobacterium radiotolerans (strain ATCC 27329 / DSM 1819 / JCM 2831 / NBRC 15690 / NCIMB 10815 / 0-1)</name>
    <dbReference type="NCBI Taxonomy" id="426355"/>
    <lineage>
        <taxon>Bacteria</taxon>
        <taxon>Pseudomonadati</taxon>
        <taxon>Pseudomonadota</taxon>
        <taxon>Alphaproteobacteria</taxon>
        <taxon>Hyphomicrobiales</taxon>
        <taxon>Methylobacteriaceae</taxon>
        <taxon>Methylobacterium</taxon>
    </lineage>
</organism>
<gene>
    <name evidence="1" type="primary">proA</name>
    <name type="ordered locus">Mrad2831_0103</name>
</gene>
<feature type="chain" id="PRO_0000340894" description="Gamma-glutamyl phosphate reductase">
    <location>
        <begin position="1"/>
        <end position="432"/>
    </location>
</feature>
<proteinExistence type="inferred from homology"/>